<feature type="chain" id="PRO_1000136052" description="Ribosome rescue factor SmrB">
    <location>
        <begin position="1"/>
        <end position="183"/>
    </location>
</feature>
<feature type="domain" description="Smr" evidence="1">
    <location>
        <begin position="98"/>
        <end position="173"/>
    </location>
</feature>
<gene>
    <name evidence="1" type="primary">smrB</name>
    <name type="ordered locus">SNSL254_A2575</name>
</gene>
<evidence type="ECO:0000255" key="1">
    <source>
        <dbReference type="HAMAP-Rule" id="MF_01042"/>
    </source>
</evidence>
<accession>B4SZQ8</accession>
<dbReference type="EC" id="3.1.-.-" evidence="1"/>
<dbReference type="EMBL" id="CP001113">
    <property type="protein sequence ID" value="ACF65652.1"/>
    <property type="molecule type" value="Genomic_DNA"/>
</dbReference>
<dbReference type="RefSeq" id="WP_000730794.1">
    <property type="nucleotide sequence ID" value="NZ_CCMR01000001.1"/>
</dbReference>
<dbReference type="SMR" id="B4SZQ8"/>
<dbReference type="KEGG" id="see:SNSL254_A2575"/>
<dbReference type="HOGENOM" id="CLU_055978_4_0_6"/>
<dbReference type="Proteomes" id="UP000008824">
    <property type="component" value="Chromosome"/>
</dbReference>
<dbReference type="GO" id="GO:0004521">
    <property type="term" value="F:RNA endonuclease activity"/>
    <property type="evidence" value="ECO:0007669"/>
    <property type="project" value="UniProtKB-UniRule"/>
</dbReference>
<dbReference type="GO" id="GO:0019843">
    <property type="term" value="F:rRNA binding"/>
    <property type="evidence" value="ECO:0007669"/>
    <property type="project" value="UniProtKB-UniRule"/>
</dbReference>
<dbReference type="GO" id="GO:0072344">
    <property type="term" value="P:rescue of stalled ribosome"/>
    <property type="evidence" value="ECO:0007669"/>
    <property type="project" value="UniProtKB-UniRule"/>
</dbReference>
<dbReference type="Gene3D" id="3.30.1370.110">
    <property type="match status" value="1"/>
</dbReference>
<dbReference type="HAMAP" id="MF_01042">
    <property type="entry name" value="SmrB"/>
    <property type="match status" value="1"/>
</dbReference>
<dbReference type="InterPro" id="IPR002625">
    <property type="entry name" value="Smr_dom"/>
</dbReference>
<dbReference type="InterPro" id="IPR036063">
    <property type="entry name" value="Smr_dom_sf"/>
</dbReference>
<dbReference type="InterPro" id="IPR022990">
    <property type="entry name" value="SmrB-like"/>
</dbReference>
<dbReference type="NCBIfam" id="NF003432">
    <property type="entry name" value="PRK04946.1"/>
    <property type="match status" value="1"/>
</dbReference>
<dbReference type="PANTHER" id="PTHR35562">
    <property type="entry name" value="DNA ENDONUCLEASE SMRA-RELATED"/>
    <property type="match status" value="1"/>
</dbReference>
<dbReference type="PANTHER" id="PTHR35562:SF1">
    <property type="entry name" value="UPF0115 PROTEIN YFCN"/>
    <property type="match status" value="1"/>
</dbReference>
<dbReference type="Pfam" id="PF01713">
    <property type="entry name" value="Smr"/>
    <property type="match status" value="1"/>
</dbReference>
<dbReference type="SMART" id="SM00463">
    <property type="entry name" value="SMR"/>
    <property type="match status" value="1"/>
</dbReference>
<dbReference type="SUPFAM" id="SSF160443">
    <property type="entry name" value="SMR domain-like"/>
    <property type="match status" value="1"/>
</dbReference>
<dbReference type="PROSITE" id="PS50828">
    <property type="entry name" value="SMR"/>
    <property type="match status" value="1"/>
</dbReference>
<reference key="1">
    <citation type="journal article" date="2011" name="J. Bacteriol.">
        <title>Comparative genomics of 28 Salmonella enterica isolates: evidence for CRISPR-mediated adaptive sublineage evolution.</title>
        <authorList>
            <person name="Fricke W.F."/>
            <person name="Mammel M.K."/>
            <person name="McDermott P.F."/>
            <person name="Tartera C."/>
            <person name="White D.G."/>
            <person name="Leclerc J.E."/>
            <person name="Ravel J."/>
            <person name="Cebula T.A."/>
        </authorList>
    </citation>
    <scope>NUCLEOTIDE SEQUENCE [LARGE SCALE GENOMIC DNA]</scope>
    <source>
        <strain>SL254</strain>
    </source>
</reference>
<keyword id="KW-0255">Endonuclease</keyword>
<keyword id="KW-0378">Hydrolase</keyword>
<keyword id="KW-0540">Nuclease</keyword>
<keyword id="KW-0694">RNA-binding</keyword>
<keyword id="KW-0699">rRNA-binding</keyword>
<name>SMRB_SALNS</name>
<sequence>MKKKTSLSEEDQALFRQLMVGTRKIKQDTIVHRPLRKKITEVPTRRLIQEQADASHYFSDEFQPLLNTEGPVKYVREDVSHFELKKMRRGDYSPELFLDLHGLTQLQAKQELGALIAACRREHIFCACVMHGHGKHILKQQTPLWLAQHPHVMAFHQAPKEYGGDAALLVLIEVEEWQPPELP</sequence>
<proteinExistence type="inferred from homology"/>
<protein>
    <recommendedName>
        <fullName evidence="1">Ribosome rescue factor SmrB</fullName>
        <ecNumber evidence="1">3.1.-.-</ecNumber>
    </recommendedName>
</protein>
<comment type="function">
    <text evidence="1">Acts as a ribosome collision sensor. Detects stalled/collided disomes (pairs of ribosomes where the leading ribosome is stalled and a second ribosome has collided with it) and endonucleolytically cleaves mRNA at the 5' boundary of the stalled ribosome. Stalled/collided disomes form a new interface (primarily via the 30S subunits) that binds SmrB. Cleaved mRNA becomes available for tmRNA ligation, leading to ribosomal subunit dissociation and rescue of stalled ribosomes.</text>
</comment>
<comment type="subunit">
    <text evidence="1">Associates with collided ribosomes, but not with correctly translating polysomes.</text>
</comment>
<comment type="similarity">
    <text evidence="1">Belongs to the SmrB family.</text>
</comment>
<organism>
    <name type="scientific">Salmonella newport (strain SL254)</name>
    <dbReference type="NCBI Taxonomy" id="423368"/>
    <lineage>
        <taxon>Bacteria</taxon>
        <taxon>Pseudomonadati</taxon>
        <taxon>Pseudomonadota</taxon>
        <taxon>Gammaproteobacteria</taxon>
        <taxon>Enterobacterales</taxon>
        <taxon>Enterobacteriaceae</taxon>
        <taxon>Salmonella</taxon>
    </lineage>
</organism>